<evidence type="ECO:0000255" key="1">
    <source>
        <dbReference type="HAMAP-Rule" id="MF_00758"/>
    </source>
</evidence>
<comment type="similarity">
    <text evidence="1">Belongs to the UPF0301 (AlgH) family.</text>
</comment>
<feature type="chain" id="PRO_1000198250" description="UPF0301 protein APP7_0234">
    <location>
        <begin position="1"/>
        <end position="186"/>
    </location>
</feature>
<proteinExistence type="inferred from homology"/>
<dbReference type="EMBL" id="CP001091">
    <property type="protein sequence ID" value="ACE60886.1"/>
    <property type="molecule type" value="Genomic_DNA"/>
</dbReference>
<dbReference type="RefSeq" id="WP_005596086.1">
    <property type="nucleotide sequence ID" value="NC_010939.1"/>
</dbReference>
<dbReference type="SMR" id="B3H074"/>
<dbReference type="KEGG" id="apa:APP7_0234"/>
<dbReference type="HOGENOM" id="CLU_057596_1_0_6"/>
<dbReference type="Proteomes" id="UP000001226">
    <property type="component" value="Chromosome"/>
</dbReference>
<dbReference type="GO" id="GO:0005829">
    <property type="term" value="C:cytosol"/>
    <property type="evidence" value="ECO:0007669"/>
    <property type="project" value="TreeGrafter"/>
</dbReference>
<dbReference type="Gene3D" id="3.40.1740.10">
    <property type="entry name" value="VC0467-like"/>
    <property type="match status" value="1"/>
</dbReference>
<dbReference type="Gene3D" id="3.30.70.1300">
    <property type="entry name" value="VC0467-like domains"/>
    <property type="match status" value="1"/>
</dbReference>
<dbReference type="HAMAP" id="MF_00758">
    <property type="entry name" value="UPF0301"/>
    <property type="match status" value="1"/>
</dbReference>
<dbReference type="InterPro" id="IPR003774">
    <property type="entry name" value="AlgH-like"/>
</dbReference>
<dbReference type="NCBIfam" id="NF001266">
    <property type="entry name" value="PRK00228.1-1"/>
    <property type="match status" value="1"/>
</dbReference>
<dbReference type="PANTHER" id="PTHR30327">
    <property type="entry name" value="UNCHARACTERIZED PROTEIN YQGE"/>
    <property type="match status" value="1"/>
</dbReference>
<dbReference type="PANTHER" id="PTHR30327:SF1">
    <property type="entry name" value="UPF0301 PROTEIN YQGE"/>
    <property type="match status" value="1"/>
</dbReference>
<dbReference type="Pfam" id="PF02622">
    <property type="entry name" value="DUF179"/>
    <property type="match status" value="1"/>
</dbReference>
<dbReference type="SUPFAM" id="SSF143456">
    <property type="entry name" value="VC0467-like"/>
    <property type="match status" value="1"/>
</dbReference>
<accession>B3H074</accession>
<name>Y234_ACTP7</name>
<organism>
    <name type="scientific">Actinobacillus pleuropneumoniae serotype 7 (strain AP76)</name>
    <dbReference type="NCBI Taxonomy" id="537457"/>
    <lineage>
        <taxon>Bacteria</taxon>
        <taxon>Pseudomonadati</taxon>
        <taxon>Pseudomonadota</taxon>
        <taxon>Gammaproteobacteria</taxon>
        <taxon>Pasteurellales</taxon>
        <taxon>Pasteurellaceae</taxon>
        <taxon>Actinobacillus</taxon>
    </lineage>
</organism>
<reference key="1">
    <citation type="submission" date="2008-06" db="EMBL/GenBank/DDBJ databases">
        <title>Genome and proteome analysis of A. pleuropneumoniae serotype 7.</title>
        <authorList>
            <person name="Linke B."/>
            <person name="Buettner F."/>
            <person name="Martinez-Arias R."/>
            <person name="Goesmann A."/>
            <person name="Baltes N."/>
            <person name="Tegetmeyer H."/>
            <person name="Singh M."/>
            <person name="Gerlach G.F."/>
        </authorList>
    </citation>
    <scope>NUCLEOTIDE SEQUENCE [LARGE SCALE GENOMIC DNA]</scope>
    <source>
        <strain>AP76</strain>
    </source>
</reference>
<gene>
    <name type="ordered locus">APP7_0234</name>
</gene>
<protein>
    <recommendedName>
        <fullName evidence="1">UPF0301 protein APP7_0234</fullName>
    </recommendedName>
</protein>
<sequence>MLENLQGKFLIATPEIDDDYFDRTVIYICEHNSNGAMGLVINTPTDLSVLELITRMDFQMANQRNYHKDQMVLSGGPVSQDRGFIIHTKTEQEFLHSYRVTDNILLTTSGDVLDSLGKPEAPEKFIVCLGCATWKPEQLEQEIARNYWLISEANDKTLFETGYLERWVEANEMLGISGVLARAGRA</sequence>